<name>Y1605_STRPB</name>
<protein>
    <recommendedName>
        <fullName evidence="1">Nucleoid-associated protein MGAS2096_Spy1605</fullName>
    </recommendedName>
</protein>
<evidence type="ECO:0000255" key="1">
    <source>
        <dbReference type="HAMAP-Rule" id="MF_00274"/>
    </source>
</evidence>
<keyword id="KW-0963">Cytoplasm</keyword>
<keyword id="KW-0238">DNA-binding</keyword>
<sequence length="99" mass="10946">MMNMQNMMKQAQKLQKQMEQKQADLAAMQFTGKSAQDLVTATFTGDKKLVGIDFKEAVVDPEDVETLQDMTTQAINDALTQIDEATKKTLGAFAGKLPF</sequence>
<gene>
    <name type="ordered locus">MGAS2096_Spy1605</name>
</gene>
<reference key="1">
    <citation type="journal article" date="2006" name="Proc. Natl. Acad. Sci. U.S.A.">
        <title>Molecular genetic anatomy of inter- and intraserotype variation in the human bacterial pathogen group A Streptococcus.</title>
        <authorList>
            <person name="Beres S.B."/>
            <person name="Richter E.W."/>
            <person name="Nagiec M.J."/>
            <person name="Sumby P."/>
            <person name="Porcella S.F."/>
            <person name="DeLeo F.R."/>
            <person name="Musser J.M."/>
        </authorList>
    </citation>
    <scope>NUCLEOTIDE SEQUENCE [LARGE SCALE GENOMIC DNA]</scope>
    <source>
        <strain>MGAS2096</strain>
    </source>
</reference>
<accession>Q1JA04</accession>
<feature type="chain" id="PRO_1000003838" description="Nucleoid-associated protein MGAS2096_Spy1605">
    <location>
        <begin position="1"/>
        <end position="99"/>
    </location>
</feature>
<proteinExistence type="inferred from homology"/>
<dbReference type="EMBL" id="CP000261">
    <property type="protein sequence ID" value="ABF36657.1"/>
    <property type="molecule type" value="Genomic_DNA"/>
</dbReference>
<dbReference type="SMR" id="Q1JA04"/>
<dbReference type="KEGG" id="spj:MGAS2096_Spy1605"/>
<dbReference type="HOGENOM" id="CLU_140930_1_1_9"/>
<dbReference type="GO" id="GO:0043590">
    <property type="term" value="C:bacterial nucleoid"/>
    <property type="evidence" value="ECO:0007669"/>
    <property type="project" value="UniProtKB-UniRule"/>
</dbReference>
<dbReference type="GO" id="GO:0005829">
    <property type="term" value="C:cytosol"/>
    <property type="evidence" value="ECO:0007669"/>
    <property type="project" value="TreeGrafter"/>
</dbReference>
<dbReference type="GO" id="GO:0003677">
    <property type="term" value="F:DNA binding"/>
    <property type="evidence" value="ECO:0007669"/>
    <property type="project" value="UniProtKB-UniRule"/>
</dbReference>
<dbReference type="Gene3D" id="3.30.1310.10">
    <property type="entry name" value="Nucleoid-associated protein YbaB-like domain"/>
    <property type="match status" value="1"/>
</dbReference>
<dbReference type="HAMAP" id="MF_00274">
    <property type="entry name" value="DNA_YbaB_EbfC"/>
    <property type="match status" value="1"/>
</dbReference>
<dbReference type="InterPro" id="IPR036894">
    <property type="entry name" value="YbaB-like_sf"/>
</dbReference>
<dbReference type="InterPro" id="IPR004401">
    <property type="entry name" value="YbaB/EbfC"/>
</dbReference>
<dbReference type="NCBIfam" id="TIGR00103">
    <property type="entry name" value="DNA_YbaB_EbfC"/>
    <property type="match status" value="1"/>
</dbReference>
<dbReference type="PANTHER" id="PTHR33449">
    <property type="entry name" value="NUCLEOID-ASSOCIATED PROTEIN YBAB"/>
    <property type="match status" value="1"/>
</dbReference>
<dbReference type="PANTHER" id="PTHR33449:SF1">
    <property type="entry name" value="NUCLEOID-ASSOCIATED PROTEIN YBAB"/>
    <property type="match status" value="1"/>
</dbReference>
<dbReference type="Pfam" id="PF02575">
    <property type="entry name" value="YbaB_DNA_bd"/>
    <property type="match status" value="1"/>
</dbReference>
<dbReference type="PIRSF" id="PIRSF004555">
    <property type="entry name" value="UCP004555"/>
    <property type="match status" value="1"/>
</dbReference>
<dbReference type="SUPFAM" id="SSF82607">
    <property type="entry name" value="YbaB-like"/>
    <property type="match status" value="1"/>
</dbReference>
<comment type="function">
    <text evidence="1">Binds to DNA and alters its conformation. May be involved in regulation of gene expression, nucleoid organization and DNA protection.</text>
</comment>
<comment type="subunit">
    <text evidence="1">Homodimer.</text>
</comment>
<comment type="subcellular location">
    <subcellularLocation>
        <location evidence="1">Cytoplasm</location>
        <location evidence="1">Nucleoid</location>
    </subcellularLocation>
</comment>
<comment type="similarity">
    <text evidence="1">Belongs to the YbaB/EbfC family.</text>
</comment>
<organism>
    <name type="scientific">Streptococcus pyogenes serotype M12 (strain MGAS2096)</name>
    <dbReference type="NCBI Taxonomy" id="370553"/>
    <lineage>
        <taxon>Bacteria</taxon>
        <taxon>Bacillati</taxon>
        <taxon>Bacillota</taxon>
        <taxon>Bacilli</taxon>
        <taxon>Lactobacillales</taxon>
        <taxon>Streptococcaceae</taxon>
        <taxon>Streptococcus</taxon>
    </lineage>
</organism>